<comment type="function">
    <text evidence="2 3 5 6">Functions in nuclear protein import as nuclear transport receptor. Serves as receptor for nuclear localization signals (NLS) in cargo substrates. Thought to mediate docking of the importin/substrate complex to the nuclear pore complex (NPC) through binding to nucleoporin and the complex is subsequently translocated through the pore by an energy requiring, RAN-dependent mechanism. Required for nuclear import of Ho endonuclease and RFP1, and involved in rRNA-processing and assembly or export of 60S ribosomal subunits.</text>
</comment>
<comment type="subunit">
    <text evidence="6">Interacts with GTP-bound GSP1 and RFP1. Associates with the nuclear pore complex.</text>
</comment>
<comment type="subcellular location">
    <subcellularLocation>
        <location>Cytoplasm</location>
    </subcellularLocation>
    <subcellularLocation>
        <location>Nucleus</location>
    </subcellularLocation>
</comment>
<comment type="miscellaneous">
    <text evidence="4">Present with 6300 molecules/cell in log phase SD medium.</text>
</comment>
<comment type="similarity">
    <text evidence="7">Belongs to the importin beta family.</text>
</comment>
<accession>Q02932</accession>
<accession>D6W3P2</accession>
<evidence type="ECO:0000255" key="1">
    <source>
        <dbReference type="PROSITE-ProRule" id="PRU00115"/>
    </source>
</evidence>
<evidence type="ECO:0000269" key="2">
    <source>
    </source>
</evidence>
<evidence type="ECO:0000269" key="3">
    <source>
    </source>
</evidence>
<evidence type="ECO:0000269" key="4">
    <source>
    </source>
</evidence>
<evidence type="ECO:0000269" key="5">
    <source>
    </source>
</evidence>
<evidence type="ECO:0000269" key="6">
    <source>
    </source>
</evidence>
<evidence type="ECO:0000305" key="7"/>
<evidence type="ECO:0007744" key="8">
    <source>
    </source>
</evidence>
<evidence type="ECO:0007829" key="9">
    <source>
        <dbReference type="PDB" id="6FVB"/>
    </source>
</evidence>
<proteinExistence type="evidence at protein level"/>
<keyword id="KW-0002">3D-structure</keyword>
<keyword id="KW-0007">Acetylation</keyword>
<keyword id="KW-0963">Cytoplasm</keyword>
<keyword id="KW-0539">Nucleus</keyword>
<keyword id="KW-0653">Protein transport</keyword>
<keyword id="KW-1185">Reference proteome</keyword>
<keyword id="KW-0813">Transport</keyword>
<feature type="initiator methionine" description="Removed" evidence="8">
    <location>
        <position position="1"/>
    </location>
</feature>
<feature type="chain" id="PRO_0000255954" description="Importin beta-like protein KAP120">
    <location>
        <begin position="2"/>
        <end position="1032"/>
    </location>
</feature>
<feature type="domain" description="Importin N-terminal" evidence="1">
    <location>
        <begin position="31"/>
        <end position="103"/>
    </location>
</feature>
<feature type="modified residue" description="N-acetylalanine" evidence="8">
    <location>
        <position position="2"/>
    </location>
</feature>
<feature type="helix" evidence="9">
    <location>
        <begin position="7"/>
        <end position="10"/>
    </location>
</feature>
<feature type="turn" evidence="9">
    <location>
        <begin position="11"/>
        <end position="13"/>
    </location>
</feature>
<feature type="helix" evidence="9">
    <location>
        <begin position="28"/>
        <end position="32"/>
    </location>
</feature>
<feature type="helix" evidence="9">
    <location>
        <begin position="36"/>
        <end position="39"/>
    </location>
</feature>
<feature type="helix" evidence="9">
    <location>
        <begin position="44"/>
        <end position="53"/>
    </location>
</feature>
<feature type="helix" evidence="9">
    <location>
        <begin position="59"/>
        <end position="76"/>
    </location>
</feature>
<feature type="strand" evidence="9">
    <location>
        <begin position="79"/>
        <end position="83"/>
    </location>
</feature>
<feature type="helix" evidence="9">
    <location>
        <begin position="87"/>
        <end position="95"/>
    </location>
</feature>
<feature type="strand" evidence="9">
    <location>
        <begin position="96"/>
        <end position="98"/>
    </location>
</feature>
<feature type="helix" evidence="9">
    <location>
        <begin position="99"/>
        <end position="102"/>
    </location>
</feature>
<feature type="helix" evidence="9">
    <location>
        <begin position="106"/>
        <end position="122"/>
    </location>
</feature>
<feature type="turn" evidence="9">
    <location>
        <begin position="125"/>
        <end position="127"/>
    </location>
</feature>
<feature type="turn" evidence="9">
    <location>
        <begin position="129"/>
        <end position="132"/>
    </location>
</feature>
<feature type="helix" evidence="9">
    <location>
        <begin position="133"/>
        <end position="143"/>
    </location>
</feature>
<feature type="strand" evidence="9">
    <location>
        <begin position="144"/>
        <end position="146"/>
    </location>
</feature>
<feature type="helix" evidence="9">
    <location>
        <begin position="148"/>
        <end position="165"/>
    </location>
</feature>
<feature type="strand" evidence="9">
    <location>
        <begin position="170"/>
        <end position="172"/>
    </location>
</feature>
<feature type="helix" evidence="9">
    <location>
        <begin position="173"/>
        <end position="180"/>
    </location>
</feature>
<feature type="helix" evidence="9">
    <location>
        <begin position="181"/>
        <end position="183"/>
    </location>
</feature>
<feature type="helix" evidence="9">
    <location>
        <begin position="185"/>
        <end position="201"/>
    </location>
</feature>
<feature type="helix" evidence="9">
    <location>
        <begin position="213"/>
        <end position="228"/>
    </location>
</feature>
<feature type="helix" evidence="9">
    <location>
        <begin position="234"/>
        <end position="236"/>
    </location>
</feature>
<feature type="helix" evidence="9">
    <location>
        <begin position="238"/>
        <end position="258"/>
    </location>
</feature>
<feature type="strand" evidence="9">
    <location>
        <begin position="259"/>
        <end position="261"/>
    </location>
</feature>
<feature type="helix" evidence="9">
    <location>
        <begin position="265"/>
        <end position="267"/>
    </location>
</feature>
<feature type="helix" evidence="9">
    <location>
        <begin position="269"/>
        <end position="284"/>
    </location>
</feature>
<feature type="helix" evidence="9">
    <location>
        <begin position="286"/>
        <end position="290"/>
    </location>
</feature>
<feature type="helix" evidence="9">
    <location>
        <begin position="295"/>
        <end position="308"/>
    </location>
</feature>
<feature type="helix" evidence="9">
    <location>
        <begin position="310"/>
        <end position="315"/>
    </location>
</feature>
<feature type="turn" evidence="9">
    <location>
        <begin position="318"/>
        <end position="320"/>
    </location>
</feature>
<feature type="helix" evidence="9">
    <location>
        <begin position="324"/>
        <end position="344"/>
    </location>
</feature>
<feature type="turn" evidence="9">
    <location>
        <begin position="358"/>
        <end position="362"/>
    </location>
</feature>
<feature type="helix" evidence="9">
    <location>
        <begin position="363"/>
        <end position="370"/>
    </location>
</feature>
<feature type="helix" evidence="9">
    <location>
        <begin position="374"/>
        <end position="387"/>
    </location>
</feature>
<feature type="helix" evidence="9">
    <location>
        <begin position="393"/>
        <end position="401"/>
    </location>
</feature>
<feature type="helix" evidence="9">
    <location>
        <begin position="403"/>
        <end position="411"/>
    </location>
</feature>
<feature type="helix" evidence="9">
    <location>
        <begin position="415"/>
        <end position="417"/>
    </location>
</feature>
<feature type="helix" evidence="9">
    <location>
        <begin position="419"/>
        <end position="433"/>
    </location>
</feature>
<feature type="helix" evidence="9">
    <location>
        <begin position="439"/>
        <end position="447"/>
    </location>
</feature>
<feature type="strand" evidence="9">
    <location>
        <begin position="450"/>
        <end position="452"/>
    </location>
</feature>
<feature type="strand" evidence="9">
    <location>
        <begin position="454"/>
        <end position="457"/>
    </location>
</feature>
<feature type="helix" evidence="9">
    <location>
        <begin position="458"/>
        <end position="472"/>
    </location>
</feature>
<feature type="helix" evidence="9">
    <location>
        <begin position="473"/>
        <end position="475"/>
    </location>
</feature>
<feature type="strand" evidence="9">
    <location>
        <begin position="477"/>
        <end position="480"/>
    </location>
</feature>
<feature type="helix" evidence="9">
    <location>
        <begin position="483"/>
        <end position="489"/>
    </location>
</feature>
<feature type="helix" evidence="9">
    <location>
        <begin position="491"/>
        <end position="496"/>
    </location>
</feature>
<feature type="helix" evidence="9">
    <location>
        <begin position="503"/>
        <end position="520"/>
    </location>
</feature>
<feature type="helix" evidence="9">
    <location>
        <begin position="526"/>
        <end position="542"/>
    </location>
</feature>
<feature type="helix" evidence="9">
    <location>
        <begin position="546"/>
        <end position="560"/>
    </location>
</feature>
<feature type="helix" evidence="9">
    <location>
        <begin position="567"/>
        <end position="570"/>
    </location>
</feature>
<feature type="helix" evidence="9">
    <location>
        <begin position="571"/>
        <end position="583"/>
    </location>
</feature>
<feature type="helix" evidence="9">
    <location>
        <begin position="585"/>
        <end position="588"/>
    </location>
</feature>
<feature type="helix" evidence="9">
    <location>
        <begin position="592"/>
        <end position="608"/>
    </location>
</feature>
<feature type="helix" evidence="9">
    <location>
        <begin position="615"/>
        <end position="634"/>
    </location>
</feature>
<feature type="helix" evidence="9">
    <location>
        <begin position="636"/>
        <end position="638"/>
    </location>
</feature>
<feature type="helix" evidence="9">
    <location>
        <begin position="639"/>
        <end position="656"/>
    </location>
</feature>
<feature type="helix" evidence="9">
    <location>
        <begin position="660"/>
        <end position="663"/>
    </location>
</feature>
<feature type="helix" evidence="9">
    <location>
        <begin position="664"/>
        <end position="674"/>
    </location>
</feature>
<feature type="helix" evidence="9">
    <location>
        <begin position="682"/>
        <end position="698"/>
    </location>
</feature>
<feature type="turn" evidence="9">
    <location>
        <begin position="702"/>
        <end position="704"/>
    </location>
</feature>
<feature type="helix" evidence="9">
    <location>
        <begin position="710"/>
        <end position="714"/>
    </location>
</feature>
<feature type="helix" evidence="9">
    <location>
        <begin position="717"/>
        <end position="722"/>
    </location>
</feature>
<feature type="helix" evidence="9">
    <location>
        <begin position="726"/>
        <end position="728"/>
    </location>
</feature>
<feature type="helix" evidence="9">
    <location>
        <begin position="729"/>
        <end position="742"/>
    </location>
</feature>
<feature type="helix" evidence="9">
    <location>
        <begin position="745"/>
        <end position="750"/>
    </location>
</feature>
<feature type="helix" evidence="9">
    <location>
        <begin position="752"/>
        <end position="763"/>
    </location>
</feature>
<feature type="turn" evidence="9">
    <location>
        <begin position="764"/>
        <end position="767"/>
    </location>
</feature>
<feature type="helix" evidence="9">
    <location>
        <begin position="770"/>
        <end position="786"/>
    </location>
</feature>
<feature type="helix" evidence="9">
    <location>
        <begin position="794"/>
        <end position="801"/>
    </location>
</feature>
<feature type="helix" evidence="9">
    <location>
        <begin position="804"/>
        <end position="812"/>
    </location>
</feature>
<feature type="strand" evidence="9">
    <location>
        <begin position="814"/>
        <end position="816"/>
    </location>
</feature>
<feature type="helix" evidence="9">
    <location>
        <begin position="820"/>
        <end position="835"/>
    </location>
</feature>
<feature type="helix" evidence="9">
    <location>
        <begin position="838"/>
        <end position="850"/>
    </location>
</feature>
<feature type="helix" evidence="9">
    <location>
        <begin position="855"/>
        <end position="860"/>
    </location>
</feature>
<feature type="turn" evidence="9">
    <location>
        <begin position="863"/>
        <end position="865"/>
    </location>
</feature>
<feature type="strand" evidence="9">
    <location>
        <begin position="871"/>
        <end position="875"/>
    </location>
</feature>
<feature type="turn" evidence="9">
    <location>
        <begin position="876"/>
        <end position="879"/>
    </location>
</feature>
<feature type="helix" evidence="9">
    <location>
        <begin position="880"/>
        <end position="892"/>
    </location>
</feature>
<feature type="helix" evidence="9">
    <location>
        <begin position="896"/>
        <end position="910"/>
    </location>
</feature>
<feature type="helix" evidence="9">
    <location>
        <begin position="915"/>
        <end position="919"/>
    </location>
</feature>
<feature type="helix" evidence="9">
    <location>
        <begin position="921"/>
        <end position="934"/>
    </location>
</feature>
<feature type="strand" evidence="9">
    <location>
        <begin position="939"/>
        <end position="941"/>
    </location>
</feature>
<feature type="helix" evidence="9">
    <location>
        <begin position="944"/>
        <end position="946"/>
    </location>
</feature>
<feature type="strand" evidence="9">
    <location>
        <begin position="947"/>
        <end position="949"/>
    </location>
</feature>
<feature type="helix" evidence="9">
    <location>
        <begin position="956"/>
        <end position="958"/>
    </location>
</feature>
<feature type="helix" evidence="9">
    <location>
        <begin position="964"/>
        <end position="976"/>
    </location>
</feature>
<feature type="helix" evidence="9">
    <location>
        <begin position="978"/>
        <end position="981"/>
    </location>
</feature>
<feature type="helix" evidence="9">
    <location>
        <begin position="984"/>
        <end position="998"/>
    </location>
</feature>
<feature type="helix" evidence="9">
    <location>
        <begin position="1001"/>
        <end position="1010"/>
    </location>
</feature>
<feature type="helix" evidence="9">
    <location>
        <begin position="1013"/>
        <end position="1023"/>
    </location>
</feature>
<name>KA120_YEAST</name>
<sequence>MASSLNELNLVQVLEQASNPQHIRSDVQKLAEQQLRQWETQAGFHYLLQSIYLNLSNSLQIRWLAVIQFKNGVDKYWRSTRINAIPKDEKASIRGRLFEMIDEQNNQLCIQNAQASARIARLDFPVEWPTLFEDLENLLNDEIIRKDSVKIYNILMHINQIVKVLGTARIGRCRPAMQSKVPLILPLIVRIYLQSFEEWTTSSNLNYEDLSSLQVSYLALKVLRRIICEGYDRPQTDQSVCDFIKLSVSHFEMLISNHENFKKFDIYEKFIKCLGKLYFNLVTGSPANFILLPCSTQILITYTRLIFDKAPKVYRENSDVTGDFWEQTAIRGLLILKRVINFIHKKGAITLKARSDKLTIDASINKINTEFLNENLITRLVDTLMEWYLRLRPTELENWFMDPEEWINEQMATSYEYQIRPCAENVFQDLMNTFSELLVPYLLKKIENDASKLSNSLDDFLRKDAIYASFQLSASAVSEMVDFDRLLIQVFLPEATNTNISGDELRIIRRRVALIINEWSTVKCSEESKSLCYKLFTNFLTDEDDKVVLLTTVQTVRTMVDDWNFNKDTFQPFLTENVHLLLRKILPSVSLTETRLYVLNTLSDIIIQTKPLISRDLLVEILQIIPNLWEIATNNASEAILANALLRLLRNLVSSLGSQSHLTWDIAIPVVALACDPSSMQYQLLSEDGYELWGMLLQNFSSHDQEFDDKFVELVPFLKYGIETHTEILPTLLEIIKSYALILNPVDFFSNNTFQDIFKQMSKYLLKLREDSFQLVLEIWEILILSNESDYENLLLQKFYETGVLSALFDAIFLEEAPSSYLCSQIIQIIARISYVNPDALMTFLATYHDNLPTSNENARMPESIRKIVSKDQTYDSVVNKLLTGWIVCFRDIFDPKFKKVHILGISSLLRTGLVPILTEFSSIASLWIEMLEEINETNRGDCEKYHLNDIVTEQSIAFHPLTAEQLRYHQLCKNNDPVHNISLKDFISQSMEYLESHLGVERYQEFLKTINPSLLENLQMFLSIQPQEARP</sequence>
<dbReference type="EMBL" id="U43503">
    <property type="protein sequence ID" value="AAB68237.1"/>
    <property type="molecule type" value="Genomic_DNA"/>
</dbReference>
<dbReference type="EMBL" id="BK006949">
    <property type="protein sequence ID" value="DAA11308.1"/>
    <property type="molecule type" value="Genomic_DNA"/>
</dbReference>
<dbReference type="PIR" id="S61997">
    <property type="entry name" value="S61997"/>
</dbReference>
<dbReference type="RefSeq" id="NP_015200.1">
    <property type="nucleotide sequence ID" value="NM_001183939.1"/>
</dbReference>
<dbReference type="PDB" id="6FVB">
    <property type="method" value="X-ray"/>
    <property type="resolution" value="3.30 A"/>
    <property type="chains" value="A=2-1032"/>
</dbReference>
<dbReference type="PDBsum" id="6FVB"/>
<dbReference type="SMR" id="Q02932"/>
<dbReference type="BioGRID" id="36056">
    <property type="interactions" value="171"/>
</dbReference>
<dbReference type="DIP" id="DIP-4000N"/>
<dbReference type="FunCoup" id="Q02932">
    <property type="interactions" value="1227"/>
</dbReference>
<dbReference type="IntAct" id="Q02932">
    <property type="interactions" value="13"/>
</dbReference>
<dbReference type="STRING" id="4932.YPL125W"/>
<dbReference type="iPTMnet" id="Q02932"/>
<dbReference type="PaxDb" id="4932-YPL125W"/>
<dbReference type="PeptideAtlas" id="Q02932"/>
<dbReference type="EnsemblFungi" id="YPL125W_mRNA">
    <property type="protein sequence ID" value="YPL125W"/>
    <property type="gene ID" value="YPL125W"/>
</dbReference>
<dbReference type="GeneID" id="855978"/>
<dbReference type="KEGG" id="sce:YPL125W"/>
<dbReference type="AGR" id="SGD:S000006046"/>
<dbReference type="SGD" id="S000006046">
    <property type="gene designation" value="KAP120"/>
</dbReference>
<dbReference type="VEuPathDB" id="FungiDB:YPL125W"/>
<dbReference type="eggNOG" id="KOG1993">
    <property type="taxonomic scope" value="Eukaryota"/>
</dbReference>
<dbReference type="GeneTree" id="ENSGT00390000014071"/>
<dbReference type="HOGENOM" id="CLU_003886_0_0_1"/>
<dbReference type="InParanoid" id="Q02932"/>
<dbReference type="OMA" id="SFHYVFH"/>
<dbReference type="OrthoDB" id="361693at2759"/>
<dbReference type="BioCyc" id="YEAST:G3O-34024-MONOMER"/>
<dbReference type="BioGRID-ORCS" id="855978">
    <property type="hits" value="0 hits in 10 CRISPR screens"/>
</dbReference>
<dbReference type="PRO" id="PR:Q02932"/>
<dbReference type="Proteomes" id="UP000002311">
    <property type="component" value="Chromosome XVI"/>
</dbReference>
<dbReference type="RNAct" id="Q02932">
    <property type="molecule type" value="protein"/>
</dbReference>
<dbReference type="GO" id="GO:0005737">
    <property type="term" value="C:cytoplasm"/>
    <property type="evidence" value="ECO:0000314"/>
    <property type="project" value="SGD"/>
</dbReference>
<dbReference type="GO" id="GO:0005829">
    <property type="term" value="C:cytosol"/>
    <property type="evidence" value="ECO:0000318"/>
    <property type="project" value="GO_Central"/>
</dbReference>
<dbReference type="GO" id="GO:0005635">
    <property type="term" value="C:nuclear envelope"/>
    <property type="evidence" value="ECO:0000318"/>
    <property type="project" value="GO_Central"/>
</dbReference>
<dbReference type="GO" id="GO:0005634">
    <property type="term" value="C:nucleus"/>
    <property type="evidence" value="ECO:0000314"/>
    <property type="project" value="SGD"/>
</dbReference>
<dbReference type="GO" id="GO:0061608">
    <property type="term" value="F:nuclear import signal receptor activity"/>
    <property type="evidence" value="ECO:0000314"/>
    <property type="project" value="SGD"/>
</dbReference>
<dbReference type="GO" id="GO:0008139">
    <property type="term" value="F:nuclear localization sequence binding"/>
    <property type="evidence" value="ECO:0000314"/>
    <property type="project" value="SGD"/>
</dbReference>
<dbReference type="GO" id="GO:0031267">
    <property type="term" value="F:small GTPase binding"/>
    <property type="evidence" value="ECO:0007669"/>
    <property type="project" value="InterPro"/>
</dbReference>
<dbReference type="GO" id="GO:0006606">
    <property type="term" value="P:protein import into nucleus"/>
    <property type="evidence" value="ECO:0000314"/>
    <property type="project" value="SGD"/>
</dbReference>
<dbReference type="FunFam" id="1.25.10.10:FF:000587">
    <property type="entry name" value="Kap120p"/>
    <property type="match status" value="1"/>
</dbReference>
<dbReference type="Gene3D" id="1.25.10.10">
    <property type="entry name" value="Leucine-rich Repeat Variant"/>
    <property type="match status" value="1"/>
</dbReference>
<dbReference type="InterPro" id="IPR011989">
    <property type="entry name" value="ARM-like"/>
</dbReference>
<dbReference type="InterPro" id="IPR016024">
    <property type="entry name" value="ARM-type_fold"/>
</dbReference>
<dbReference type="InterPro" id="IPR001494">
    <property type="entry name" value="Importin-beta_N"/>
</dbReference>
<dbReference type="PANTHER" id="PTHR10997:SF7">
    <property type="entry name" value="IMPORTIN-11"/>
    <property type="match status" value="1"/>
</dbReference>
<dbReference type="PANTHER" id="PTHR10997">
    <property type="entry name" value="IMPORTIN-7, 8, 11"/>
    <property type="match status" value="1"/>
</dbReference>
<dbReference type="Pfam" id="PF03810">
    <property type="entry name" value="IBN_N"/>
    <property type="match status" value="1"/>
</dbReference>
<dbReference type="SMART" id="SM00913">
    <property type="entry name" value="IBN_N"/>
    <property type="match status" value="1"/>
</dbReference>
<dbReference type="SUPFAM" id="SSF48371">
    <property type="entry name" value="ARM repeat"/>
    <property type="match status" value="1"/>
</dbReference>
<dbReference type="PROSITE" id="PS50166">
    <property type="entry name" value="IMPORTIN_B_NT"/>
    <property type="match status" value="1"/>
</dbReference>
<protein>
    <recommendedName>
        <fullName>Importin beta-like protein KAP120</fullName>
    </recommendedName>
    <alternativeName>
        <fullName>Karyopherin-120</fullName>
    </alternativeName>
</protein>
<gene>
    <name type="primary">KAP120</name>
    <name type="ordered locus">YPL125W</name>
</gene>
<organism>
    <name type="scientific">Saccharomyces cerevisiae (strain ATCC 204508 / S288c)</name>
    <name type="common">Baker's yeast</name>
    <dbReference type="NCBI Taxonomy" id="559292"/>
    <lineage>
        <taxon>Eukaryota</taxon>
        <taxon>Fungi</taxon>
        <taxon>Dikarya</taxon>
        <taxon>Ascomycota</taxon>
        <taxon>Saccharomycotina</taxon>
        <taxon>Saccharomycetes</taxon>
        <taxon>Saccharomycetales</taxon>
        <taxon>Saccharomycetaceae</taxon>
        <taxon>Saccharomyces</taxon>
    </lineage>
</organism>
<reference key="1">
    <citation type="journal article" date="1997" name="Nature">
        <title>The nucleotide sequence of Saccharomyces cerevisiae chromosome XVI.</title>
        <authorList>
            <person name="Bussey H."/>
            <person name="Storms R.K."/>
            <person name="Ahmed A."/>
            <person name="Albermann K."/>
            <person name="Allen E."/>
            <person name="Ansorge W."/>
            <person name="Araujo R."/>
            <person name="Aparicio A."/>
            <person name="Barrell B.G."/>
            <person name="Badcock K."/>
            <person name="Benes V."/>
            <person name="Botstein D."/>
            <person name="Bowman S."/>
            <person name="Brueckner M."/>
            <person name="Carpenter J."/>
            <person name="Cherry J.M."/>
            <person name="Chung E."/>
            <person name="Churcher C.M."/>
            <person name="Coster F."/>
            <person name="Davis K."/>
            <person name="Davis R.W."/>
            <person name="Dietrich F.S."/>
            <person name="Delius H."/>
            <person name="DiPaolo T."/>
            <person name="Dubois E."/>
            <person name="Duesterhoeft A."/>
            <person name="Duncan M."/>
            <person name="Floeth M."/>
            <person name="Fortin N."/>
            <person name="Friesen J.D."/>
            <person name="Fritz C."/>
            <person name="Goffeau A."/>
            <person name="Hall J."/>
            <person name="Hebling U."/>
            <person name="Heumann K."/>
            <person name="Hilbert H."/>
            <person name="Hillier L.W."/>
            <person name="Hunicke-Smith S."/>
            <person name="Hyman R.W."/>
            <person name="Johnston M."/>
            <person name="Kalman S."/>
            <person name="Kleine K."/>
            <person name="Komp C."/>
            <person name="Kurdi O."/>
            <person name="Lashkari D."/>
            <person name="Lew H."/>
            <person name="Lin A."/>
            <person name="Lin D."/>
            <person name="Louis E.J."/>
            <person name="Marathe R."/>
            <person name="Messenguy F."/>
            <person name="Mewes H.-W."/>
            <person name="Mirtipati S."/>
            <person name="Moestl D."/>
            <person name="Mueller-Auer S."/>
            <person name="Namath A."/>
            <person name="Nentwich U."/>
            <person name="Oefner P."/>
            <person name="Pearson D."/>
            <person name="Petel F.X."/>
            <person name="Pohl T.M."/>
            <person name="Purnelle B."/>
            <person name="Rajandream M.A."/>
            <person name="Rechmann S."/>
            <person name="Rieger M."/>
            <person name="Riles L."/>
            <person name="Roberts D."/>
            <person name="Schaefer M."/>
            <person name="Scharfe M."/>
            <person name="Scherens B."/>
            <person name="Schramm S."/>
            <person name="Schroeder M."/>
            <person name="Sdicu A.-M."/>
            <person name="Tettelin H."/>
            <person name="Urrestarazu L.A."/>
            <person name="Ushinsky S."/>
            <person name="Vierendeels F."/>
            <person name="Vissers S."/>
            <person name="Voss H."/>
            <person name="Walsh S.V."/>
            <person name="Wambutt R."/>
            <person name="Wang Y."/>
            <person name="Wedler E."/>
            <person name="Wedler H."/>
            <person name="Winnett E."/>
            <person name="Zhong W.-W."/>
            <person name="Zollner A."/>
            <person name="Vo D.H."/>
            <person name="Hani J."/>
        </authorList>
    </citation>
    <scope>NUCLEOTIDE SEQUENCE [LARGE SCALE GENOMIC DNA]</scope>
    <source>
        <strain>ATCC 204508 / S288c</strain>
    </source>
</reference>
<reference key="2">
    <citation type="journal article" date="2014" name="G3 (Bethesda)">
        <title>The reference genome sequence of Saccharomyces cerevisiae: Then and now.</title>
        <authorList>
            <person name="Engel S.R."/>
            <person name="Dietrich F.S."/>
            <person name="Fisk D.G."/>
            <person name="Binkley G."/>
            <person name="Balakrishnan R."/>
            <person name="Costanzo M.C."/>
            <person name="Dwight S.S."/>
            <person name="Hitz B.C."/>
            <person name="Karra K."/>
            <person name="Nash R.S."/>
            <person name="Weng S."/>
            <person name="Wong E.D."/>
            <person name="Lloyd P."/>
            <person name="Skrzypek M.S."/>
            <person name="Miyasato S.R."/>
            <person name="Simison M."/>
            <person name="Cherry J.M."/>
        </authorList>
    </citation>
    <scope>GENOME REANNOTATION</scope>
    <source>
        <strain>ATCC 204508 / S288c</strain>
    </source>
</reference>
<reference key="3">
    <citation type="journal article" date="2000" name="J. Cell Biol.">
        <title>The yeast nuclear pore complex: composition, architecture, and transport mechanism.</title>
        <authorList>
            <person name="Rout M.P."/>
            <person name="Aitchison J.D."/>
            <person name="Suprapto A."/>
            <person name="Hjertaas K."/>
            <person name="Zhao Y."/>
            <person name="Chait B.T."/>
        </authorList>
    </citation>
    <scope>ASSOCIATION WITH THE NUCLEAR PORE COMPLEX</scope>
    <scope>SUBCELLULAR LOCATION</scope>
    <scope>IDENTIFICATION BY MASS SPECTROMETRY</scope>
</reference>
<reference key="4">
    <citation type="journal article" date="2000" name="Mol. Biol. Cell">
        <title>Factors affecting nuclear export of the 60S ribosomal subunit in vivo.</title>
        <authorList>
            <person name="Stage-Zimmermann T."/>
            <person name="Schmidt U."/>
            <person name="Silver P.A."/>
        </authorList>
    </citation>
    <scope>FUNCTION</scope>
</reference>
<reference key="5">
    <citation type="journal article" date="2003" name="FEMS Microbiol. Lett.">
        <title>The budding index of Saccharomyces cerevisiae deletion strains identifies genes important for cell cycle progression.</title>
        <authorList>
            <person name="Zettel M.F."/>
            <person name="Garza L.R."/>
            <person name="Cass A.M."/>
            <person name="Myhre R.A."/>
            <person name="Haizlip L.A."/>
            <person name="Osadebe S.N."/>
            <person name="Sudimack D.W."/>
            <person name="Pathak R."/>
            <person name="Stone T.L."/>
            <person name="Polymenis M."/>
        </authorList>
    </citation>
    <scope>FUNCTION</scope>
</reference>
<reference key="6">
    <citation type="journal article" date="2003" name="Nature">
        <title>Global analysis of protein localization in budding yeast.</title>
        <authorList>
            <person name="Huh W.-K."/>
            <person name="Falvo J.V."/>
            <person name="Gerke L.C."/>
            <person name="Carroll A.S."/>
            <person name="Howson R.W."/>
            <person name="Weissman J.S."/>
            <person name="O'Shea E.K."/>
        </authorList>
    </citation>
    <scope>SUBCELLULAR LOCATION [LARGE SCALE ANALYSIS]</scope>
</reference>
<reference key="7">
    <citation type="journal article" date="2003" name="Nature">
        <title>Global analysis of protein expression in yeast.</title>
        <authorList>
            <person name="Ghaemmaghami S."/>
            <person name="Huh W.-K."/>
            <person name="Bower K."/>
            <person name="Howson R.W."/>
            <person name="Belle A."/>
            <person name="Dephoure N."/>
            <person name="O'Shea E.K."/>
            <person name="Weissman J.S."/>
        </authorList>
    </citation>
    <scope>LEVEL OF PROTEIN EXPRESSION [LARGE SCALE ANALYSIS]</scope>
</reference>
<reference key="8">
    <citation type="journal article" date="2006" name="J. Biol. Chem.">
        <title>Nuclear import of Ho endonuclease utilizes two nuclear localization signals and four importins of the ribosomal import system.</title>
        <authorList>
            <person name="Bakhrat A."/>
            <person name="Baranes K."/>
            <person name="Krichevsky O."/>
            <person name="Rom I."/>
            <person name="Schlenstedt G."/>
            <person name="Pietrokovski S."/>
            <person name="Raveh D."/>
        </authorList>
    </citation>
    <scope>FUNCTION</scope>
</reference>
<reference key="9">
    <citation type="journal article" date="2006" name="Mol. Cell. Biol.">
        <title>Kap120 functions as a nuclear import receptor for ribosome assembly factor Rpf1 in yeast.</title>
        <authorList>
            <person name="Caesar S."/>
            <person name="Greiner M."/>
            <person name="Schlenstedt G."/>
        </authorList>
    </citation>
    <scope>FUNCTION</scope>
    <scope>INTERACTION WITH GSP1 AND RFP1</scope>
</reference>
<reference key="10">
    <citation type="journal article" date="2012" name="Proc. Natl. Acad. Sci. U.S.A.">
        <title>N-terminal acetylome analyses and functional insights of the N-terminal acetyltransferase NatB.</title>
        <authorList>
            <person name="Van Damme P."/>
            <person name="Lasa M."/>
            <person name="Polevoda B."/>
            <person name="Gazquez C."/>
            <person name="Elosegui-Artola A."/>
            <person name="Kim D.S."/>
            <person name="De Juan-Pardo E."/>
            <person name="Demeyer K."/>
            <person name="Hole K."/>
            <person name="Larrea E."/>
            <person name="Timmerman E."/>
            <person name="Prieto J."/>
            <person name="Arnesen T."/>
            <person name="Sherman F."/>
            <person name="Gevaert K."/>
            <person name="Aldabe R."/>
        </authorList>
    </citation>
    <scope>ACETYLATION [LARGE SCALE ANALYSIS] AT ALA-2</scope>
    <scope>CLEAVAGE OF INITIATOR METHIONINE [LARGE SCALE ANALYSIS]</scope>
    <scope>IDENTIFICATION BY MASS SPECTROMETRY [LARGE SCALE ANALYSIS]</scope>
</reference>